<keyword id="KW-0072">Autophagy</keyword>
<keyword id="KW-0256">Endoplasmic reticulum</keyword>
<keyword id="KW-0931">ER-Golgi transport</keyword>
<keyword id="KW-0472">Membrane</keyword>
<keyword id="KW-0653">Protein transport</keyword>
<keyword id="KW-1185">Reference proteome</keyword>
<keyword id="KW-0813">Transport</keyword>
<gene>
    <name type="primary">sec16</name>
    <name type="ORF">ACLA_096630</name>
</gene>
<dbReference type="EMBL" id="DS027058">
    <property type="protein sequence ID" value="EAW08730.1"/>
    <property type="molecule type" value="Genomic_DNA"/>
</dbReference>
<dbReference type="RefSeq" id="XP_001270156.1">
    <property type="nucleotide sequence ID" value="XM_001270155.1"/>
</dbReference>
<dbReference type="STRING" id="344612.A1CME3"/>
<dbReference type="EnsemblFungi" id="EAW08730">
    <property type="protein sequence ID" value="EAW08730"/>
    <property type="gene ID" value="ACLA_096630"/>
</dbReference>
<dbReference type="GeneID" id="4702212"/>
<dbReference type="KEGG" id="act:ACLA_096630"/>
<dbReference type="VEuPathDB" id="FungiDB:ACLA_096630"/>
<dbReference type="eggNOG" id="KOG1913">
    <property type="taxonomic scope" value="Eukaryota"/>
</dbReference>
<dbReference type="HOGENOM" id="CLU_001147_0_0_1"/>
<dbReference type="OMA" id="YKSPYDL"/>
<dbReference type="OrthoDB" id="8918678at2759"/>
<dbReference type="Proteomes" id="UP000006701">
    <property type="component" value="Unassembled WGS sequence"/>
</dbReference>
<dbReference type="GO" id="GO:0070971">
    <property type="term" value="C:endoplasmic reticulum exit site"/>
    <property type="evidence" value="ECO:0007669"/>
    <property type="project" value="UniProtKB-ARBA"/>
</dbReference>
<dbReference type="GO" id="GO:0005789">
    <property type="term" value="C:endoplasmic reticulum membrane"/>
    <property type="evidence" value="ECO:0007669"/>
    <property type="project" value="UniProtKB-SubCell"/>
</dbReference>
<dbReference type="GO" id="GO:0012507">
    <property type="term" value="C:ER to Golgi transport vesicle membrane"/>
    <property type="evidence" value="ECO:0007669"/>
    <property type="project" value="TreeGrafter"/>
</dbReference>
<dbReference type="GO" id="GO:0006914">
    <property type="term" value="P:autophagy"/>
    <property type="evidence" value="ECO:0007669"/>
    <property type="project" value="UniProtKB-KW"/>
</dbReference>
<dbReference type="GO" id="GO:0007030">
    <property type="term" value="P:Golgi organization"/>
    <property type="evidence" value="ECO:0007669"/>
    <property type="project" value="TreeGrafter"/>
</dbReference>
<dbReference type="GO" id="GO:0046907">
    <property type="term" value="P:intracellular transport"/>
    <property type="evidence" value="ECO:0007669"/>
    <property type="project" value="UniProtKB-ARBA"/>
</dbReference>
<dbReference type="GO" id="GO:0070973">
    <property type="term" value="P:protein localization to endoplasmic reticulum exit site"/>
    <property type="evidence" value="ECO:0007669"/>
    <property type="project" value="TreeGrafter"/>
</dbReference>
<dbReference type="GO" id="GO:0015031">
    <property type="term" value="P:protein transport"/>
    <property type="evidence" value="ECO:0007669"/>
    <property type="project" value="UniProtKB-KW"/>
</dbReference>
<dbReference type="GO" id="GO:0016192">
    <property type="term" value="P:vesicle-mediated transport"/>
    <property type="evidence" value="ECO:0007669"/>
    <property type="project" value="UniProtKB-KW"/>
</dbReference>
<dbReference type="CDD" id="cd09233">
    <property type="entry name" value="ACE1-Sec16-like"/>
    <property type="match status" value="1"/>
</dbReference>
<dbReference type="FunFam" id="1.25.40.1030:FF:000008">
    <property type="entry name" value="Protein transport protein sec16"/>
    <property type="match status" value="1"/>
</dbReference>
<dbReference type="Gene3D" id="1.25.40.1030">
    <property type="match status" value="1"/>
</dbReference>
<dbReference type="InterPro" id="IPR024340">
    <property type="entry name" value="Sec16_CCD"/>
</dbReference>
<dbReference type="InterPro" id="IPR024468">
    <property type="entry name" value="Sec16_N"/>
</dbReference>
<dbReference type="InterPro" id="IPR024298">
    <property type="entry name" value="Sec16_Sec23-bd"/>
</dbReference>
<dbReference type="PANTHER" id="PTHR13402">
    <property type="entry name" value="RGPR-RELATED"/>
    <property type="match status" value="1"/>
</dbReference>
<dbReference type="PANTHER" id="PTHR13402:SF6">
    <property type="entry name" value="SECRETORY 16, ISOFORM I"/>
    <property type="match status" value="1"/>
</dbReference>
<dbReference type="Pfam" id="PF12932">
    <property type="entry name" value="Sec16"/>
    <property type="match status" value="1"/>
</dbReference>
<dbReference type="Pfam" id="PF12935">
    <property type="entry name" value="Sec16_N"/>
    <property type="match status" value="1"/>
</dbReference>
<dbReference type="Pfam" id="PF12931">
    <property type="entry name" value="TPR_Sec16"/>
    <property type="match status" value="1"/>
</dbReference>
<sequence>MTQVEGLSTWNPAFRPEDNESIITNNLAQLVLDPESRPAEVSPVDVHTSPFGDDADVENETHVLESPLPSEPQDAPAPVATDSDPSQNADPITELKDVLEQPRHIDGNDSSIHPDDTQVAENVAEYVSTQPEDDKEQANGLHLGNTVAEGMSAEHDKDEHTSGLHLGNSVAEASHFSAPEEFSGVETSGNGLHFRAVKGDTSWIDGDEVEEDKDAMPHGEISNDRPGFWGNLGNDGRDNEDDFFDQLKTQTKPIYVPPETESRFEEGVPLLDNSPQTPVEQAQRGDNQLDNVFAGDEDDEGDFFNEIQKSTPEEGPFHITRKSTTQVLSTLDTTPDSPFSETSPTAQDFNQILADTSAQNETKEPSDADLAARWQAELSDDAEETMPPEDDLAARWQAELDDDDDDLLLDEASTANNDQEAAQLNQDHNAGFAASLQSPFGTPENPARPKAQPISYTPHQPSTSDLLQGIPAQAPVPQPHNAPTSNYFTAQAPPNPVTTRAESFAERSKEGYKSPYDLPEDLARPRRPVVSKQVIPQPGNLPPPPPRSSSIPAPSPQPSKAPAGVLGTSPKQPVAAVTPKNFYEELPLPPPRPKSRPASSGRYTPNPTSAPPPAPLSVPQSIPAPANPYASIPLAPKSAGDLQSPPELHQPEKLDPYSSLLAPAALGAPVVPGAQSRYSPKPPGLQAGTKPLPSPRYSPAPPASTVVAGAPPPRNRYASQPSSISGPGAVLPFQPRTSSPLAHHEKISYHPPGVSEERRRSEPAAGLPPPSHAQPFQPPVIPESQGPVDAGIHENVQPSVTQPNSPPRNPYAPSAYVNEFAKRVAPVQNDLPSIGTQNVAYAPPVGESPFVPPRRSQTQSPSQQLLSPRLSLPPIDPLQRPASVHGATSPTKTVNPYAPAQVSLHNRALSQSLDFIPPTDGQQLDPLERWKGAPIVKFGFGGIVTSCFPKHIPRYSAGQAAPMIKSCPGEIKICPLNDRLPPAESIVQYPGPLKNKSKKKDLLAWLSSKIAAFENEGDPSFDPTQPDITKRHEEKILLWKIVRFLVEHDGALEGSAEAQKSLRSVMFPHLQQSTTDQVPGDSFIPAATPQAIDASARSDAADSHSIESLRDSLVLGEREKAVWAAVDNRLWGHAMIIASTMDRSVWKQVVQEFVRREVRSTTSRTESLAAFYEILAGNVEESIDELVPPSARAGLQMISKVDGQGPAKNTLDGLESWRETLGLVLSNRSPDDQRALLALGQLLLSYGRTEAAHICFIVSRAAVFGGIDDPQANIVLLGVDHHRLASSAPLHNDDSILLTEAYEYATSVLAGSPMNTLPYLLAFKLIHAWSLADQGRKSEAQQYCDAIAAALKAATKPSGYHNPHLFYGVDELSARLRQTASDAGSSWITRPSMEKVSGSMWAKFNSFVAGEESDAASTGSGKAEEIGPFAKVSGTPTVSRSPSVSDIYGSYPMGGAQSAPNTGASRYHPVNQYALSSSPEQLRGRSSLDSQRSSSYGFPPPQRRGSQEPSTPVEMNIYQGMPTYGSPSAAGYQSTPPQTSYMPLAPVEEDSAAYSPPDPQPAPSQTLDNVSPYQPAHYAPESFGQPFETNDASATSQFEQGGYMPPSSGGGYEPPFVEVNPASASDDVEDESNEGAKPKKKSFMDEDDDDDMAARAAAIQKAERARRDREADEAFRKAAEADAQKPPPTTAKKGWFTGWFGGKKEENNSGGGPIRAKLGEENSFYYDKELKKWVNKKDPGSSTPARGTPPPPRGSAPPSRTASGTGGPPPPAVGTPPLAALGAGSRPSSSAGVPPRLTSSPAPSALGAPPPIPRSVSTSATLPTPPDGSAGAPPRPATSLSYASSIDDLLGAPQARKGPAARGKKKGRYVDVMAK</sequence>
<accession>A1CME3</accession>
<comment type="function">
    <text evidence="1">Involved in the initiation of assembly of the COPII coat required for the formation of transport vesicles from the endoplasmic reticulum (ER) and the selection of cargo molecules. Also involved in autophagy (By similarity).</text>
</comment>
<comment type="subcellular location">
    <subcellularLocation>
        <location evidence="1">Endoplasmic reticulum membrane</location>
        <topology evidence="1">Peripheral membrane protein</topology>
        <orientation evidence="1">Cytoplasmic side</orientation>
    </subcellularLocation>
</comment>
<comment type="similarity">
    <text evidence="3">Belongs to the SEC16 family.</text>
</comment>
<feature type="chain" id="PRO_0000295528" description="COPII coat assembly protein sec16">
    <location>
        <begin position="1"/>
        <end position="1875"/>
    </location>
</feature>
<feature type="region of interest" description="Disordered" evidence="2">
    <location>
        <begin position="34"/>
        <end position="140"/>
    </location>
</feature>
<feature type="region of interest" description="Disordered" evidence="2">
    <location>
        <begin position="211"/>
        <end position="241"/>
    </location>
</feature>
<feature type="region of interest" description="Disordered" evidence="2">
    <location>
        <begin position="258"/>
        <end position="814"/>
    </location>
</feature>
<feature type="region of interest" description="Disordered" evidence="2">
    <location>
        <begin position="835"/>
        <end position="868"/>
    </location>
</feature>
<feature type="region of interest" description="Disordered" evidence="2">
    <location>
        <begin position="1413"/>
        <end position="1443"/>
    </location>
</feature>
<feature type="region of interest" description="Disordered" evidence="2">
    <location>
        <begin position="1475"/>
        <end position="1717"/>
    </location>
</feature>
<feature type="region of interest" description="Disordered" evidence="2">
    <location>
        <begin position="1733"/>
        <end position="1875"/>
    </location>
</feature>
<feature type="compositionally biased region" description="Basic and acidic residues" evidence="2">
    <location>
        <begin position="93"/>
        <end position="116"/>
    </location>
</feature>
<feature type="compositionally biased region" description="Basic and acidic residues" evidence="2">
    <location>
        <begin position="214"/>
        <end position="223"/>
    </location>
</feature>
<feature type="compositionally biased region" description="Polar residues" evidence="2">
    <location>
        <begin position="273"/>
        <end position="290"/>
    </location>
</feature>
<feature type="compositionally biased region" description="Polar residues" evidence="2">
    <location>
        <begin position="322"/>
        <end position="360"/>
    </location>
</feature>
<feature type="compositionally biased region" description="Acidic residues" evidence="2">
    <location>
        <begin position="378"/>
        <end position="391"/>
    </location>
</feature>
<feature type="compositionally biased region" description="Acidic residues" evidence="2">
    <location>
        <begin position="399"/>
        <end position="409"/>
    </location>
</feature>
<feature type="compositionally biased region" description="Polar residues" evidence="2">
    <location>
        <begin position="413"/>
        <end position="428"/>
    </location>
</feature>
<feature type="compositionally biased region" description="Polar residues" evidence="2">
    <location>
        <begin position="454"/>
        <end position="466"/>
    </location>
</feature>
<feature type="compositionally biased region" description="Basic and acidic residues" evidence="2">
    <location>
        <begin position="503"/>
        <end position="512"/>
    </location>
</feature>
<feature type="compositionally biased region" description="Pro residues" evidence="2">
    <location>
        <begin position="539"/>
        <end position="559"/>
    </location>
</feature>
<feature type="compositionally biased region" description="Low complexity" evidence="2">
    <location>
        <begin position="596"/>
        <end position="607"/>
    </location>
</feature>
<feature type="compositionally biased region" description="Low complexity" evidence="2">
    <location>
        <begin position="660"/>
        <end position="674"/>
    </location>
</feature>
<feature type="compositionally biased region" description="Pro residues" evidence="2">
    <location>
        <begin position="692"/>
        <end position="702"/>
    </location>
</feature>
<feature type="compositionally biased region" description="Pro residues" evidence="2">
    <location>
        <begin position="766"/>
        <end position="781"/>
    </location>
</feature>
<feature type="compositionally biased region" description="Low complexity" evidence="2">
    <location>
        <begin position="853"/>
        <end position="868"/>
    </location>
</feature>
<feature type="compositionally biased region" description="Polar residues" evidence="2">
    <location>
        <begin position="1434"/>
        <end position="1443"/>
    </location>
</feature>
<feature type="compositionally biased region" description="Low complexity" evidence="2">
    <location>
        <begin position="1484"/>
        <end position="1495"/>
    </location>
</feature>
<feature type="compositionally biased region" description="Polar residues" evidence="2">
    <location>
        <begin position="1531"/>
        <end position="1541"/>
    </location>
</feature>
<feature type="compositionally biased region" description="Polar residues" evidence="2">
    <location>
        <begin position="1563"/>
        <end position="1572"/>
    </location>
</feature>
<feature type="compositionally biased region" description="Polar residues" evidence="2">
    <location>
        <begin position="1587"/>
        <end position="1599"/>
    </location>
</feature>
<feature type="compositionally biased region" description="Basic and acidic residues" evidence="2">
    <location>
        <begin position="1661"/>
        <end position="1683"/>
    </location>
</feature>
<feature type="compositionally biased region" description="Low complexity" evidence="2">
    <location>
        <begin position="1775"/>
        <end position="1785"/>
    </location>
</feature>
<reference key="1">
    <citation type="journal article" date="2008" name="PLoS Genet.">
        <title>Genomic islands in the pathogenic filamentous fungus Aspergillus fumigatus.</title>
        <authorList>
            <person name="Fedorova N.D."/>
            <person name="Khaldi N."/>
            <person name="Joardar V.S."/>
            <person name="Maiti R."/>
            <person name="Amedeo P."/>
            <person name="Anderson M.J."/>
            <person name="Crabtree J."/>
            <person name="Silva J.C."/>
            <person name="Badger J.H."/>
            <person name="Albarraq A."/>
            <person name="Angiuoli S."/>
            <person name="Bussey H."/>
            <person name="Bowyer P."/>
            <person name="Cotty P.J."/>
            <person name="Dyer P.S."/>
            <person name="Egan A."/>
            <person name="Galens K."/>
            <person name="Fraser-Liggett C.M."/>
            <person name="Haas B.J."/>
            <person name="Inman J.M."/>
            <person name="Kent R."/>
            <person name="Lemieux S."/>
            <person name="Malavazi I."/>
            <person name="Orvis J."/>
            <person name="Roemer T."/>
            <person name="Ronning C.M."/>
            <person name="Sundaram J.P."/>
            <person name="Sutton G."/>
            <person name="Turner G."/>
            <person name="Venter J.C."/>
            <person name="White O.R."/>
            <person name="Whitty B.R."/>
            <person name="Youngman P."/>
            <person name="Wolfe K.H."/>
            <person name="Goldman G.H."/>
            <person name="Wortman J.R."/>
            <person name="Jiang B."/>
            <person name="Denning D.W."/>
            <person name="Nierman W.C."/>
        </authorList>
    </citation>
    <scope>NUCLEOTIDE SEQUENCE [LARGE SCALE GENOMIC DNA]</scope>
    <source>
        <strain>ATCC 1007 / CBS 513.65 / DSM 816 / NCTC 3887 / NRRL 1 / QM 1276 / 107</strain>
    </source>
</reference>
<name>SEC16_ASPCL</name>
<protein>
    <recommendedName>
        <fullName>COPII coat assembly protein sec16</fullName>
    </recommendedName>
    <alternativeName>
        <fullName>Protein transport protein sec16</fullName>
    </alternativeName>
</protein>
<evidence type="ECO:0000250" key="1"/>
<evidence type="ECO:0000256" key="2">
    <source>
        <dbReference type="SAM" id="MobiDB-lite"/>
    </source>
</evidence>
<evidence type="ECO:0000305" key="3"/>
<organism>
    <name type="scientific">Aspergillus clavatus (strain ATCC 1007 / CBS 513.65 / DSM 816 / NCTC 3887 / NRRL 1 / QM 1276 / 107)</name>
    <dbReference type="NCBI Taxonomy" id="344612"/>
    <lineage>
        <taxon>Eukaryota</taxon>
        <taxon>Fungi</taxon>
        <taxon>Dikarya</taxon>
        <taxon>Ascomycota</taxon>
        <taxon>Pezizomycotina</taxon>
        <taxon>Eurotiomycetes</taxon>
        <taxon>Eurotiomycetidae</taxon>
        <taxon>Eurotiales</taxon>
        <taxon>Aspergillaceae</taxon>
        <taxon>Aspergillus</taxon>
        <taxon>Aspergillus subgen. Fumigati</taxon>
    </lineage>
</organism>
<proteinExistence type="inferred from homology"/>